<accession>B0R461</accession>
<dbReference type="EMBL" id="AM774415">
    <property type="protein sequence ID" value="CAP13526.1"/>
    <property type="molecule type" value="Genomic_DNA"/>
</dbReference>
<dbReference type="RefSeq" id="WP_010902553.1">
    <property type="nucleotide sequence ID" value="NC_010364.1"/>
</dbReference>
<dbReference type="SMR" id="B0R461"/>
<dbReference type="EnsemblBacteria" id="CAP13526">
    <property type="protein sequence ID" value="CAP13526"/>
    <property type="gene ID" value="OE_2168R"/>
</dbReference>
<dbReference type="GeneID" id="5954381"/>
<dbReference type="KEGG" id="hsl:OE_2168R"/>
<dbReference type="HOGENOM" id="CLU_000445_107_19_2"/>
<dbReference type="PhylomeDB" id="B0R461"/>
<dbReference type="Proteomes" id="UP000001321">
    <property type="component" value="Chromosome"/>
</dbReference>
<dbReference type="GO" id="GO:0005886">
    <property type="term" value="C:plasma membrane"/>
    <property type="evidence" value="ECO:0007669"/>
    <property type="project" value="UniProtKB-SubCell"/>
</dbReference>
<dbReference type="GO" id="GO:0004888">
    <property type="term" value="F:transmembrane signaling receptor activity"/>
    <property type="evidence" value="ECO:0007669"/>
    <property type="project" value="InterPro"/>
</dbReference>
<dbReference type="GO" id="GO:0006935">
    <property type="term" value="P:chemotaxis"/>
    <property type="evidence" value="ECO:0007669"/>
    <property type="project" value="UniProtKB-KW"/>
</dbReference>
<dbReference type="GO" id="GO:0007165">
    <property type="term" value="P:signal transduction"/>
    <property type="evidence" value="ECO:0007669"/>
    <property type="project" value="UniProtKB-KW"/>
</dbReference>
<dbReference type="CDD" id="cd06225">
    <property type="entry name" value="HAMP"/>
    <property type="match status" value="2"/>
</dbReference>
<dbReference type="CDD" id="cd11386">
    <property type="entry name" value="MCP_signal"/>
    <property type="match status" value="1"/>
</dbReference>
<dbReference type="Gene3D" id="6.10.250.1910">
    <property type="match status" value="1"/>
</dbReference>
<dbReference type="Gene3D" id="1.10.287.950">
    <property type="entry name" value="Methyl-accepting chemotaxis protein"/>
    <property type="match status" value="1"/>
</dbReference>
<dbReference type="InterPro" id="IPR004090">
    <property type="entry name" value="Chemotax_Me-accpt_rcpt"/>
</dbReference>
<dbReference type="InterPro" id="IPR003660">
    <property type="entry name" value="HAMP_dom"/>
</dbReference>
<dbReference type="InterPro" id="IPR004089">
    <property type="entry name" value="MCPsignal_dom"/>
</dbReference>
<dbReference type="PANTHER" id="PTHR32089:SF112">
    <property type="entry name" value="LYSOZYME-LIKE PROTEIN-RELATED"/>
    <property type="match status" value="1"/>
</dbReference>
<dbReference type="PANTHER" id="PTHR32089">
    <property type="entry name" value="METHYL-ACCEPTING CHEMOTAXIS PROTEIN MCPB"/>
    <property type="match status" value="1"/>
</dbReference>
<dbReference type="Pfam" id="PF00672">
    <property type="entry name" value="HAMP"/>
    <property type="match status" value="1"/>
</dbReference>
<dbReference type="Pfam" id="PF00015">
    <property type="entry name" value="MCPsignal"/>
    <property type="match status" value="1"/>
</dbReference>
<dbReference type="PRINTS" id="PR00260">
    <property type="entry name" value="CHEMTRNSDUCR"/>
</dbReference>
<dbReference type="SMART" id="SM00304">
    <property type="entry name" value="HAMP"/>
    <property type="match status" value="3"/>
</dbReference>
<dbReference type="SMART" id="SM00283">
    <property type="entry name" value="MA"/>
    <property type="match status" value="1"/>
</dbReference>
<dbReference type="SUPFAM" id="SSF158472">
    <property type="entry name" value="HAMP domain-like"/>
    <property type="match status" value="1"/>
</dbReference>
<dbReference type="SUPFAM" id="SSF58104">
    <property type="entry name" value="Methyl-accepting chemotaxis protein (MCP) signaling domain"/>
    <property type="match status" value="1"/>
</dbReference>
<dbReference type="PROSITE" id="PS50111">
    <property type="entry name" value="CHEMOTAXIS_TRANSDUC_2"/>
    <property type="match status" value="1"/>
</dbReference>
<dbReference type="PROSITE" id="PS50885">
    <property type="entry name" value="HAMP"/>
    <property type="match status" value="2"/>
</dbReference>
<reference key="1">
    <citation type="journal article" date="2008" name="Genomics">
        <title>Evolution in the laboratory: the genome of Halobacterium salinarum strain R1 compared to that of strain NRC-1.</title>
        <authorList>
            <person name="Pfeiffer F."/>
            <person name="Schuster S.C."/>
            <person name="Broicher A."/>
            <person name="Falb M."/>
            <person name="Palm P."/>
            <person name="Rodewald K."/>
            <person name="Ruepp A."/>
            <person name="Soppa J."/>
            <person name="Tittor J."/>
            <person name="Oesterhelt D."/>
        </authorList>
    </citation>
    <scope>NUCLEOTIDE SEQUENCE [LARGE SCALE GENOMIC DNA]</scope>
    <source>
        <strain>ATCC 29341 / DSM 671 / R1</strain>
    </source>
</reference>
<reference key="2">
    <citation type="journal article" date="2008" name="J. Mol. Biol.">
        <title>Physiological sites of deamidation and methyl esterification in sensory transducers of Halobacterium salinarum.</title>
        <authorList>
            <person name="Koch M.K."/>
            <person name="Staudinger W.F."/>
            <person name="Siedler F."/>
            <person name="Oesterhelt D."/>
        </authorList>
    </citation>
    <scope>METHYLATION</scope>
    <source>
        <strain>R1 / S9</strain>
    </source>
</reference>
<name>HTR6_HALS3</name>
<organism>
    <name type="scientific">Halobacterium salinarum (strain ATCC 29341 / DSM 671 / R1)</name>
    <dbReference type="NCBI Taxonomy" id="478009"/>
    <lineage>
        <taxon>Archaea</taxon>
        <taxon>Methanobacteriati</taxon>
        <taxon>Methanobacteriota</taxon>
        <taxon>Stenosarchaea group</taxon>
        <taxon>Halobacteria</taxon>
        <taxon>Halobacteriales</taxon>
        <taxon>Halobacteriaceae</taxon>
        <taxon>Halobacterium</taxon>
        <taxon>Halobacterium salinarum NRC-34001</taxon>
    </lineage>
</organism>
<feature type="chain" id="PRO_0000429079" description="Transducer protein Htr6">
    <location>
        <begin position="1"/>
        <end position="789"/>
    </location>
</feature>
<feature type="transmembrane region" description="Helical" evidence="2">
    <location>
        <begin position="29"/>
        <end position="49"/>
    </location>
</feature>
<feature type="transmembrane region" description="Helical" evidence="2">
    <location>
        <begin position="294"/>
        <end position="314"/>
    </location>
</feature>
<feature type="domain" description="HAMP 1" evidence="3">
    <location>
        <begin position="315"/>
        <end position="367"/>
    </location>
</feature>
<feature type="domain" description="HAMP 2" evidence="3">
    <location>
        <begin position="409"/>
        <end position="462"/>
    </location>
</feature>
<feature type="domain" description="Methyl-accepting transducer" evidence="4">
    <location>
        <begin position="481"/>
        <end position="717"/>
    </location>
</feature>
<feature type="region of interest" description="Disordered" evidence="5">
    <location>
        <begin position="763"/>
        <end position="789"/>
    </location>
</feature>
<feature type="compositionally biased region" description="Acidic residues" evidence="5">
    <location>
        <begin position="772"/>
        <end position="789"/>
    </location>
</feature>
<gene>
    <name type="primary">htr6</name>
    <name type="synonym">htrVI</name>
    <name type="ordered locus">OE_2168R</name>
</gene>
<keyword id="KW-1003">Cell membrane</keyword>
<keyword id="KW-0145">Chemotaxis</keyword>
<keyword id="KW-0472">Membrane</keyword>
<keyword id="KW-0677">Repeat</keyword>
<keyword id="KW-0807">Transducer</keyword>
<keyword id="KW-0812">Transmembrane</keyword>
<keyword id="KW-1133">Transmembrane helix</keyword>
<protein>
    <recommendedName>
        <fullName>Transducer protein Htr6</fullName>
    </recommendedName>
</protein>
<proteinExistence type="evidence at protein level"/>
<evidence type="ECO:0000250" key="1"/>
<evidence type="ECO:0000255" key="2"/>
<evidence type="ECO:0000255" key="3">
    <source>
        <dbReference type="PROSITE-ProRule" id="PRU00102"/>
    </source>
</evidence>
<evidence type="ECO:0000255" key="4">
    <source>
        <dbReference type="PROSITE-ProRule" id="PRU00284"/>
    </source>
</evidence>
<evidence type="ECO:0000256" key="5">
    <source>
        <dbReference type="SAM" id="MobiDB-lite"/>
    </source>
</evidence>
<evidence type="ECO:0000269" key="6">
    <source>
    </source>
</evidence>
<evidence type="ECO:0000305" key="7"/>
<comment type="function">
    <text evidence="1">Potentially involved in chemo- or phototactic signal transduction.</text>
</comment>
<comment type="subcellular location">
    <subcellularLocation>
        <location evidence="7">Cell membrane</location>
        <topology evidence="7">Multi-pass membrane protein</topology>
    </subcellularLocation>
</comment>
<comment type="PTM">
    <text evidence="6">Methylated by CheR.</text>
</comment>
<comment type="similarity">
    <text evidence="7">Belongs to the methyl-accepting chemotaxis (MCP) protein family.</text>
</comment>
<sequence length="789" mass="83927">MSDGITGALRNAASVVAPDAIRRRFGAKFAVAFIVVLVVIAGAGVFAFQSTETTVEHQTTRQLAESNQLEADAIGAWMEQQRTHARSVSQDEALRDDRRAAPYILLKDQLLPADVVSMHLVNETRGTVVASTELAIEGRSLAELDAPWTTAAVPEGPGNDSAVWATEQSYRSPVLNDEPVMAFASSVPKREGAHLVVVTRIQPQVDRLSDANSTRRTTILNTGDEPVLDSNSRFDAGALTDSIAAVRNDTTAATTTVSNGRVYALSATPHTDWVTVTSVDTGEAFAVRDTVGQTVTVLVVLAVISLAIVGIALGRHTVTPLKRLRNRAQDIESGTFDVDLSTRRIDEVGRLYGSFDDMRVSLQDRIQEAEAAVEEANAAKAEAEELRTDAEDAQAEAERAKATAEAASERLQERAADYSEVMQAVADGDLTERLDEDADEEAMRAVATEFNAMLDGLEATIAQVAGFADEVADETLQVATGAEEIETTSQTVSERIQEIADGAIQQHDDLERAAGEMDELSASIQEVAASSATVAETAADAVERGEAGRDAAESAIDDMAEIESLSADAVDQILALQERMSDIGDIIEFITDIAEQTNMLALNANIEAARADKDGDGFAVVANEVKDLAEETKQAAADIESEIQAVQAETDETVADIRATSEHIDDGVSTVERAAAAIEDTVDAIEDANHGIQEISDATEDQADATQSVVRRVDDVADISQHVTEDAEQVSAAAEEQSASVAEIARSADDLRDRADALATTVNQFETRADADEPDADTTVDASADDTGD</sequence>